<keyword id="KW-0025">Alternative splicing</keyword>
<keyword id="KW-0131">Cell cycle</keyword>
<keyword id="KW-1015">Disulfide bond</keyword>
<keyword id="KW-0325">Glycoprotein</keyword>
<keyword id="KW-0378">Hydrolase</keyword>
<keyword id="KW-0472">Membrane</keyword>
<keyword id="KW-0645">Protease</keyword>
<keyword id="KW-1267">Proteomics identification</keyword>
<keyword id="KW-1185">Reference proteome</keyword>
<keyword id="KW-0720">Serine protease</keyword>
<keyword id="KW-0735">Signal-anchor</keyword>
<keyword id="KW-0812">Transmembrane</keyword>
<keyword id="KW-1133">Transmembrane helix</keyword>
<dbReference type="EC" id="3.4.21.-"/>
<dbReference type="EMBL" id="AF071882">
    <property type="protein sequence ID" value="AAD41463.1"/>
    <property type="status" value="ALT_FRAME"/>
    <property type="molecule type" value="mRNA"/>
</dbReference>
<dbReference type="EMBL" id="AY498712">
    <property type="protein sequence ID" value="AAS78642.1"/>
    <property type="molecule type" value="mRNA"/>
</dbReference>
<dbReference type="EMBL" id="AK131518">
    <property type="protein sequence ID" value="BAD18660.1"/>
    <property type="molecule type" value="mRNA"/>
</dbReference>
<dbReference type="EMBL" id="AC096653">
    <property type="status" value="NOT_ANNOTATED_CDS"/>
    <property type="molecule type" value="Genomic_DNA"/>
</dbReference>
<dbReference type="EMBL" id="AC096727">
    <property type="status" value="NOT_ANNOTATED_CDS"/>
    <property type="molecule type" value="Genomic_DNA"/>
</dbReference>
<dbReference type="EMBL" id="BC111796">
    <property type="protein sequence ID" value="AAI11797.1"/>
    <property type="molecule type" value="mRNA"/>
</dbReference>
<dbReference type="EMBL" id="BN000133">
    <property type="protein sequence ID" value="CAD67985.1"/>
    <property type="status" value="ALT_SEQ"/>
    <property type="molecule type" value="mRNA"/>
</dbReference>
<dbReference type="CCDS" id="CCDS3519.1">
    <molecule id="Q6ZMR5-1"/>
</dbReference>
<dbReference type="CCDS" id="CCDS47065.1">
    <molecule id="Q6ZMR5-2"/>
</dbReference>
<dbReference type="RefSeq" id="NP_001107859.1">
    <molecule id="Q6ZMR5-2"/>
    <property type="nucleotide sequence ID" value="NM_001114387.2"/>
</dbReference>
<dbReference type="RefSeq" id="NP_872412.3">
    <molecule id="Q6ZMR5-1"/>
    <property type="nucleotide sequence ID" value="NM_182606.3"/>
</dbReference>
<dbReference type="SMR" id="Q6ZMR5"/>
<dbReference type="BioGRID" id="130971">
    <property type="interactions" value="14"/>
</dbReference>
<dbReference type="FunCoup" id="Q6ZMR5">
    <property type="interactions" value="12"/>
</dbReference>
<dbReference type="IntAct" id="Q6ZMR5">
    <property type="interactions" value="11"/>
</dbReference>
<dbReference type="STRING" id="9606.ENSP00000334611"/>
<dbReference type="MEROPS" id="S01.292"/>
<dbReference type="TCDB" id="8.A.131.1.7">
    <property type="family name" value="the transmembrane protease serine 3 (tmprss3) family"/>
</dbReference>
<dbReference type="GlyCosmos" id="Q6ZMR5">
    <property type="glycosylation" value="2 sites, No reported glycans"/>
</dbReference>
<dbReference type="GlyGen" id="Q6ZMR5">
    <property type="glycosylation" value="3 sites"/>
</dbReference>
<dbReference type="iPTMnet" id="Q6ZMR5"/>
<dbReference type="PhosphoSitePlus" id="Q6ZMR5"/>
<dbReference type="BioMuta" id="TMPRSS11A"/>
<dbReference type="DMDM" id="74758674"/>
<dbReference type="jPOST" id="Q6ZMR5"/>
<dbReference type="MassIVE" id="Q6ZMR5"/>
<dbReference type="PaxDb" id="9606-ENSP00000334611"/>
<dbReference type="PeptideAtlas" id="Q6ZMR5"/>
<dbReference type="ProteomicsDB" id="67906">
    <molecule id="Q6ZMR5-1"/>
</dbReference>
<dbReference type="ProteomicsDB" id="67907">
    <molecule id="Q6ZMR5-2"/>
</dbReference>
<dbReference type="TopDownProteomics" id="Q6ZMR5-2">
    <molecule id="Q6ZMR5-2"/>
</dbReference>
<dbReference type="Antibodypedia" id="57609">
    <property type="antibodies" value="78 antibodies from 22 providers"/>
</dbReference>
<dbReference type="DNASU" id="339967"/>
<dbReference type="Ensembl" id="ENST00000334830.11">
    <molecule id="Q6ZMR5-1"/>
    <property type="protein sequence ID" value="ENSP00000334611.7"/>
    <property type="gene ID" value="ENSG00000187054.17"/>
</dbReference>
<dbReference type="Ensembl" id="ENST00000508048.6">
    <molecule id="Q6ZMR5-2"/>
    <property type="protein sequence ID" value="ENSP00000426911.2"/>
    <property type="gene ID" value="ENSG00000187054.17"/>
</dbReference>
<dbReference type="GeneID" id="339967"/>
<dbReference type="KEGG" id="hsa:339967"/>
<dbReference type="MANE-Select" id="ENST00000508048.6">
    <property type="protein sequence ID" value="ENSP00000426911.2"/>
    <property type="RefSeq nucleotide sequence ID" value="NM_001114387.2"/>
    <property type="RefSeq protein sequence ID" value="NP_001107859.1"/>
</dbReference>
<dbReference type="UCSC" id="uc003hds.2">
    <molecule id="Q6ZMR5-2"/>
    <property type="organism name" value="human"/>
</dbReference>
<dbReference type="AGR" id="HGNC:27954"/>
<dbReference type="CTD" id="339967"/>
<dbReference type="DisGeNET" id="339967"/>
<dbReference type="GeneCards" id="TMPRSS11A"/>
<dbReference type="HGNC" id="HGNC:27954">
    <property type="gene designation" value="TMPRSS11A"/>
</dbReference>
<dbReference type="HPA" id="ENSG00000187054">
    <property type="expression patterns" value="Tissue enhanced (esophagus, lymphoid tissue, vagina)"/>
</dbReference>
<dbReference type="MIM" id="611704">
    <property type="type" value="gene"/>
</dbReference>
<dbReference type="neXtProt" id="NX_Q6ZMR5"/>
<dbReference type="OpenTargets" id="ENSG00000187054"/>
<dbReference type="PharmGKB" id="PA142670726"/>
<dbReference type="VEuPathDB" id="HostDB:ENSG00000187054"/>
<dbReference type="eggNOG" id="KOG3627">
    <property type="taxonomic scope" value="Eukaryota"/>
</dbReference>
<dbReference type="GeneTree" id="ENSGT00940000161698"/>
<dbReference type="InParanoid" id="Q6ZMR5"/>
<dbReference type="OMA" id="DIKSGMF"/>
<dbReference type="OrthoDB" id="9425590at2759"/>
<dbReference type="PAN-GO" id="Q6ZMR5">
    <property type="GO annotations" value="0 GO annotations based on evolutionary models"/>
</dbReference>
<dbReference type="PhylomeDB" id="Q6ZMR5"/>
<dbReference type="TreeFam" id="TF351684"/>
<dbReference type="BRENDA" id="3.4.21.B61">
    <property type="organism ID" value="2681"/>
</dbReference>
<dbReference type="PathwayCommons" id="Q6ZMR5"/>
<dbReference type="SignaLink" id="Q6ZMR5"/>
<dbReference type="BioGRID-ORCS" id="339967">
    <property type="hits" value="9 hits in 1145 CRISPR screens"/>
</dbReference>
<dbReference type="ChiTaRS" id="TMPRSS11A">
    <property type="organism name" value="human"/>
</dbReference>
<dbReference type="GenomeRNAi" id="339967"/>
<dbReference type="Pharos" id="Q6ZMR5">
    <property type="development level" value="Tbio"/>
</dbReference>
<dbReference type="PRO" id="PR:Q6ZMR5"/>
<dbReference type="Proteomes" id="UP000005640">
    <property type="component" value="Chromosome 4"/>
</dbReference>
<dbReference type="RNAct" id="Q6ZMR5">
    <property type="molecule type" value="protein"/>
</dbReference>
<dbReference type="Bgee" id="ENSG00000187054">
    <property type="expression patterns" value="Expressed in esophagus mucosa and 33 other cell types or tissues"/>
</dbReference>
<dbReference type="ExpressionAtlas" id="Q6ZMR5">
    <property type="expression patterns" value="baseline and differential"/>
</dbReference>
<dbReference type="GO" id="GO:0005576">
    <property type="term" value="C:extracellular region"/>
    <property type="evidence" value="ECO:0007669"/>
    <property type="project" value="InterPro"/>
</dbReference>
<dbReference type="GO" id="GO:0005886">
    <property type="term" value="C:plasma membrane"/>
    <property type="evidence" value="ECO:0007669"/>
    <property type="project" value="InterPro"/>
</dbReference>
<dbReference type="GO" id="GO:0004252">
    <property type="term" value="F:serine-type endopeptidase activity"/>
    <property type="evidence" value="ECO:0007669"/>
    <property type="project" value="InterPro"/>
</dbReference>
<dbReference type="GO" id="GO:0006508">
    <property type="term" value="P:proteolysis"/>
    <property type="evidence" value="ECO:0007669"/>
    <property type="project" value="UniProtKB-KW"/>
</dbReference>
<dbReference type="CDD" id="cd00190">
    <property type="entry name" value="Tryp_SPc"/>
    <property type="match status" value="1"/>
</dbReference>
<dbReference type="FunFam" id="2.40.10.10:FF:000003">
    <property type="entry name" value="Transmembrane serine protease 3"/>
    <property type="match status" value="1"/>
</dbReference>
<dbReference type="Gene3D" id="3.30.70.960">
    <property type="entry name" value="SEA domain"/>
    <property type="match status" value="1"/>
</dbReference>
<dbReference type="Gene3D" id="2.40.10.10">
    <property type="entry name" value="Trypsin-like serine proteases"/>
    <property type="match status" value="2"/>
</dbReference>
<dbReference type="InterPro" id="IPR017329">
    <property type="entry name" value="Pept_S1A_HAT/DESC1"/>
</dbReference>
<dbReference type="InterPro" id="IPR009003">
    <property type="entry name" value="Peptidase_S1_PA"/>
</dbReference>
<dbReference type="InterPro" id="IPR043504">
    <property type="entry name" value="Peptidase_S1_PA_chymotrypsin"/>
</dbReference>
<dbReference type="InterPro" id="IPR001314">
    <property type="entry name" value="Peptidase_S1A"/>
</dbReference>
<dbReference type="InterPro" id="IPR000082">
    <property type="entry name" value="SEA_dom"/>
</dbReference>
<dbReference type="InterPro" id="IPR036364">
    <property type="entry name" value="SEA_dom_sf"/>
</dbReference>
<dbReference type="InterPro" id="IPR001254">
    <property type="entry name" value="Trypsin_dom"/>
</dbReference>
<dbReference type="InterPro" id="IPR018114">
    <property type="entry name" value="TRYPSIN_HIS"/>
</dbReference>
<dbReference type="InterPro" id="IPR033116">
    <property type="entry name" value="TRYPSIN_SER"/>
</dbReference>
<dbReference type="PANTHER" id="PTHR24252">
    <property type="entry name" value="ACROSIN-RELATED"/>
    <property type="match status" value="1"/>
</dbReference>
<dbReference type="PANTHER" id="PTHR24252:SF17">
    <property type="entry name" value="SUPPRESSOR OF TUMORIGENICITY 14 PROTEIN HOMOLOG-RELATED"/>
    <property type="match status" value="1"/>
</dbReference>
<dbReference type="Pfam" id="PF01390">
    <property type="entry name" value="SEA"/>
    <property type="match status" value="1"/>
</dbReference>
<dbReference type="Pfam" id="PF00089">
    <property type="entry name" value="Trypsin"/>
    <property type="match status" value="1"/>
</dbReference>
<dbReference type="PIRSF" id="PIRSF037941">
    <property type="entry name" value="TMPRSS11ABCDE"/>
    <property type="match status" value="1"/>
</dbReference>
<dbReference type="PRINTS" id="PR00722">
    <property type="entry name" value="CHYMOTRYPSIN"/>
</dbReference>
<dbReference type="SMART" id="SM00020">
    <property type="entry name" value="Tryp_SPc"/>
    <property type="match status" value="1"/>
</dbReference>
<dbReference type="SUPFAM" id="SSF82671">
    <property type="entry name" value="SEA domain"/>
    <property type="match status" value="1"/>
</dbReference>
<dbReference type="SUPFAM" id="SSF50494">
    <property type="entry name" value="Trypsin-like serine proteases"/>
    <property type="match status" value="1"/>
</dbReference>
<dbReference type="PROSITE" id="PS50024">
    <property type="entry name" value="SEA"/>
    <property type="match status" value="1"/>
</dbReference>
<dbReference type="PROSITE" id="PS50240">
    <property type="entry name" value="TRYPSIN_DOM"/>
    <property type="match status" value="1"/>
</dbReference>
<dbReference type="PROSITE" id="PS00134">
    <property type="entry name" value="TRYPSIN_HIS"/>
    <property type="match status" value="1"/>
</dbReference>
<dbReference type="PROSITE" id="PS00135">
    <property type="entry name" value="TRYPSIN_SER"/>
    <property type="match status" value="1"/>
</dbReference>
<protein>
    <recommendedName>
        <fullName>Transmembrane protease serine 11A</fullName>
        <ecNumber>3.4.21.-</ecNumber>
    </recommendedName>
    <alternativeName>
        <fullName>Airway trypsin-like protease 1</fullName>
    </alternativeName>
    <alternativeName>
        <fullName>Epidermal type-II transmembrane serine protease</fullName>
    </alternativeName>
    <alternativeName>
        <fullName>Esophageal cancer-susceptibility gene 1 protein</fullName>
    </alternativeName>
</protein>
<sequence length="418" mass="47226">MMYRTVGFGTRSRNLKPWMIAVLIVLSLTVVAVTIGLLVHFLVFDQKKEYYHGSFKILDPQINNNFGQSNTYQLKDLRETTENLVDEIFIDSAWKKNYIKNQVVRLTPEEDGVKVDVIMVFQFPSTEQRAVREKKIQSILNQKIRNLRALPINASSVQVNAMSSSTGELTVQASCGKRVVPLNVNRIASGVIAPKAAWPWQASLQYDNIHQCGATLISNTWLVTAAHCFQKYKNPHQWTVSFGTKINPPLMKRNVRRFIIHEKYRSAAREYDIAVVQVSSRVTFSDDIRQICLPEASASFQPNLTVHITGFGALYYGGESQNDLREARVKIISDDVCKQPQVYGNDIKPGMFCAGYMEGIYDACRGDSGGPLVTRDLKDTWYLIGIVSWGDNCGQKDKPGVYTQVTYYRNWIASKTGI</sequence>
<organism>
    <name type="scientific">Homo sapiens</name>
    <name type="common">Human</name>
    <dbReference type="NCBI Taxonomy" id="9606"/>
    <lineage>
        <taxon>Eukaryota</taxon>
        <taxon>Metazoa</taxon>
        <taxon>Chordata</taxon>
        <taxon>Craniata</taxon>
        <taxon>Vertebrata</taxon>
        <taxon>Euteleostomi</taxon>
        <taxon>Mammalia</taxon>
        <taxon>Eutheria</taxon>
        <taxon>Euarchontoglires</taxon>
        <taxon>Primates</taxon>
        <taxon>Haplorrhini</taxon>
        <taxon>Catarrhini</taxon>
        <taxon>Hominidae</taxon>
        <taxon>Homo</taxon>
    </lineage>
</organism>
<reference key="1">
    <citation type="journal article" date="1998" name="Zhonghua Zhong Liu Za Zhi">
        <title>Cloning and identification of cDNA fragments related to human esophageal cancer.</title>
        <authorList>
            <person name="Su T."/>
            <person name="Liu H."/>
            <person name="Lu S.-H."/>
        </authorList>
    </citation>
    <scope>NUCLEOTIDE SEQUENCE [MRNA] (ISOFORM 2)</scope>
    <scope>TISSUE SPECIFICITY</scope>
    <scope>VARIANT ARG-290</scope>
    <source>
        <tissue>Esophagus</tissue>
    </source>
</reference>
<reference key="2">
    <citation type="submission" date="2003-12" db="EMBL/GenBank/DDBJ databases">
        <title>Identification and characterization of a novel human type II transmembrane serine protease.</title>
        <authorList>
            <person name="Mariotti F."/>
            <person name="Mastrogiacomo A."/>
        </authorList>
    </citation>
    <scope>NUCLEOTIDE SEQUENCE [MRNA] (ISOFORM 2)</scope>
</reference>
<reference key="3">
    <citation type="journal article" date="2004" name="Nat. Genet.">
        <title>Complete sequencing and characterization of 21,243 full-length human cDNAs.</title>
        <authorList>
            <person name="Ota T."/>
            <person name="Suzuki Y."/>
            <person name="Nishikawa T."/>
            <person name="Otsuki T."/>
            <person name="Sugiyama T."/>
            <person name="Irie R."/>
            <person name="Wakamatsu A."/>
            <person name="Hayashi K."/>
            <person name="Sato H."/>
            <person name="Nagai K."/>
            <person name="Kimura K."/>
            <person name="Makita H."/>
            <person name="Sekine M."/>
            <person name="Obayashi M."/>
            <person name="Nishi T."/>
            <person name="Shibahara T."/>
            <person name="Tanaka T."/>
            <person name="Ishii S."/>
            <person name="Yamamoto J."/>
            <person name="Saito K."/>
            <person name="Kawai Y."/>
            <person name="Isono Y."/>
            <person name="Nakamura Y."/>
            <person name="Nagahari K."/>
            <person name="Murakami K."/>
            <person name="Yasuda T."/>
            <person name="Iwayanagi T."/>
            <person name="Wagatsuma M."/>
            <person name="Shiratori A."/>
            <person name="Sudo H."/>
            <person name="Hosoiri T."/>
            <person name="Kaku Y."/>
            <person name="Kodaira H."/>
            <person name="Kondo H."/>
            <person name="Sugawara M."/>
            <person name="Takahashi M."/>
            <person name="Kanda K."/>
            <person name="Yokoi T."/>
            <person name="Furuya T."/>
            <person name="Kikkawa E."/>
            <person name="Omura Y."/>
            <person name="Abe K."/>
            <person name="Kamihara K."/>
            <person name="Katsuta N."/>
            <person name="Sato K."/>
            <person name="Tanikawa M."/>
            <person name="Yamazaki M."/>
            <person name="Ninomiya K."/>
            <person name="Ishibashi T."/>
            <person name="Yamashita H."/>
            <person name="Murakawa K."/>
            <person name="Fujimori K."/>
            <person name="Tanai H."/>
            <person name="Kimata M."/>
            <person name="Watanabe M."/>
            <person name="Hiraoka S."/>
            <person name="Chiba Y."/>
            <person name="Ishida S."/>
            <person name="Ono Y."/>
            <person name="Takiguchi S."/>
            <person name="Watanabe S."/>
            <person name="Yosida M."/>
            <person name="Hotuta T."/>
            <person name="Kusano J."/>
            <person name="Kanehori K."/>
            <person name="Takahashi-Fujii A."/>
            <person name="Hara H."/>
            <person name="Tanase T.-O."/>
            <person name="Nomura Y."/>
            <person name="Togiya S."/>
            <person name="Komai F."/>
            <person name="Hara R."/>
            <person name="Takeuchi K."/>
            <person name="Arita M."/>
            <person name="Imose N."/>
            <person name="Musashino K."/>
            <person name="Yuuki H."/>
            <person name="Oshima A."/>
            <person name="Sasaki N."/>
            <person name="Aotsuka S."/>
            <person name="Yoshikawa Y."/>
            <person name="Matsunawa H."/>
            <person name="Ichihara T."/>
            <person name="Shiohata N."/>
            <person name="Sano S."/>
            <person name="Moriya S."/>
            <person name="Momiyama H."/>
            <person name="Satoh N."/>
            <person name="Takami S."/>
            <person name="Terashima Y."/>
            <person name="Suzuki O."/>
            <person name="Nakagawa S."/>
            <person name="Senoh A."/>
            <person name="Mizoguchi H."/>
            <person name="Goto Y."/>
            <person name="Shimizu F."/>
            <person name="Wakebe H."/>
            <person name="Hishigaki H."/>
            <person name="Watanabe T."/>
            <person name="Sugiyama A."/>
            <person name="Takemoto M."/>
            <person name="Kawakami B."/>
            <person name="Yamazaki M."/>
            <person name="Watanabe K."/>
            <person name="Kumagai A."/>
            <person name="Itakura S."/>
            <person name="Fukuzumi Y."/>
            <person name="Fujimori Y."/>
            <person name="Komiyama M."/>
            <person name="Tashiro H."/>
            <person name="Tanigami A."/>
            <person name="Fujiwara T."/>
            <person name="Ono T."/>
            <person name="Yamada K."/>
            <person name="Fujii Y."/>
            <person name="Ozaki K."/>
            <person name="Hirao M."/>
            <person name="Ohmori Y."/>
            <person name="Kawabata A."/>
            <person name="Hikiji T."/>
            <person name="Kobatake N."/>
            <person name="Inagaki H."/>
            <person name="Ikema Y."/>
            <person name="Okamoto S."/>
            <person name="Okitani R."/>
            <person name="Kawakami T."/>
            <person name="Noguchi S."/>
            <person name="Itoh T."/>
            <person name="Shigeta K."/>
            <person name="Senba T."/>
            <person name="Matsumura K."/>
            <person name="Nakajima Y."/>
            <person name="Mizuno T."/>
            <person name="Morinaga M."/>
            <person name="Sasaki M."/>
            <person name="Togashi T."/>
            <person name="Oyama M."/>
            <person name="Hata H."/>
            <person name="Watanabe M."/>
            <person name="Komatsu T."/>
            <person name="Mizushima-Sugano J."/>
            <person name="Satoh T."/>
            <person name="Shirai Y."/>
            <person name="Takahashi Y."/>
            <person name="Nakagawa K."/>
            <person name="Okumura K."/>
            <person name="Nagase T."/>
            <person name="Nomura N."/>
            <person name="Kikuchi H."/>
            <person name="Masuho Y."/>
            <person name="Yamashita R."/>
            <person name="Nakai K."/>
            <person name="Yada T."/>
            <person name="Nakamura Y."/>
            <person name="Ohara O."/>
            <person name="Isogai T."/>
            <person name="Sugano S."/>
        </authorList>
    </citation>
    <scope>NUCLEOTIDE SEQUENCE [LARGE SCALE MRNA] (ISOFORM 1)</scope>
    <scope>VARIANT ARG-290</scope>
    <source>
        <tissue>Tongue</tissue>
    </source>
</reference>
<reference key="4">
    <citation type="journal article" date="2005" name="Nature">
        <title>Generation and annotation of the DNA sequences of human chromosomes 2 and 4.</title>
        <authorList>
            <person name="Hillier L.W."/>
            <person name="Graves T.A."/>
            <person name="Fulton R.S."/>
            <person name="Fulton L.A."/>
            <person name="Pepin K.H."/>
            <person name="Minx P."/>
            <person name="Wagner-McPherson C."/>
            <person name="Layman D."/>
            <person name="Wylie K."/>
            <person name="Sekhon M."/>
            <person name="Becker M.C."/>
            <person name="Fewell G.A."/>
            <person name="Delehaunty K.D."/>
            <person name="Miner T.L."/>
            <person name="Nash W.E."/>
            <person name="Kremitzki C."/>
            <person name="Oddy L."/>
            <person name="Du H."/>
            <person name="Sun H."/>
            <person name="Bradshaw-Cordum H."/>
            <person name="Ali J."/>
            <person name="Carter J."/>
            <person name="Cordes M."/>
            <person name="Harris A."/>
            <person name="Isak A."/>
            <person name="van Brunt A."/>
            <person name="Nguyen C."/>
            <person name="Du F."/>
            <person name="Courtney L."/>
            <person name="Kalicki J."/>
            <person name="Ozersky P."/>
            <person name="Abbott S."/>
            <person name="Armstrong J."/>
            <person name="Belter E.A."/>
            <person name="Caruso L."/>
            <person name="Cedroni M."/>
            <person name="Cotton M."/>
            <person name="Davidson T."/>
            <person name="Desai A."/>
            <person name="Elliott G."/>
            <person name="Erb T."/>
            <person name="Fronick C."/>
            <person name="Gaige T."/>
            <person name="Haakenson W."/>
            <person name="Haglund K."/>
            <person name="Holmes A."/>
            <person name="Harkins R."/>
            <person name="Kim K."/>
            <person name="Kruchowski S.S."/>
            <person name="Strong C.M."/>
            <person name="Grewal N."/>
            <person name="Goyea E."/>
            <person name="Hou S."/>
            <person name="Levy A."/>
            <person name="Martinka S."/>
            <person name="Mead K."/>
            <person name="McLellan M.D."/>
            <person name="Meyer R."/>
            <person name="Randall-Maher J."/>
            <person name="Tomlinson C."/>
            <person name="Dauphin-Kohlberg S."/>
            <person name="Kozlowicz-Reilly A."/>
            <person name="Shah N."/>
            <person name="Swearengen-Shahid S."/>
            <person name="Snider J."/>
            <person name="Strong J.T."/>
            <person name="Thompson J."/>
            <person name="Yoakum M."/>
            <person name="Leonard S."/>
            <person name="Pearman C."/>
            <person name="Trani L."/>
            <person name="Radionenko M."/>
            <person name="Waligorski J.E."/>
            <person name="Wang C."/>
            <person name="Rock S.M."/>
            <person name="Tin-Wollam A.-M."/>
            <person name="Maupin R."/>
            <person name="Latreille P."/>
            <person name="Wendl M.C."/>
            <person name="Yang S.-P."/>
            <person name="Pohl C."/>
            <person name="Wallis J.W."/>
            <person name="Spieth J."/>
            <person name="Bieri T.A."/>
            <person name="Berkowicz N."/>
            <person name="Nelson J.O."/>
            <person name="Osborne J."/>
            <person name="Ding L."/>
            <person name="Meyer R."/>
            <person name="Sabo A."/>
            <person name="Shotland Y."/>
            <person name="Sinha P."/>
            <person name="Wohldmann P.E."/>
            <person name="Cook L.L."/>
            <person name="Hickenbotham M.T."/>
            <person name="Eldred J."/>
            <person name="Williams D."/>
            <person name="Jones T.A."/>
            <person name="She X."/>
            <person name="Ciccarelli F.D."/>
            <person name="Izaurralde E."/>
            <person name="Taylor J."/>
            <person name="Schmutz J."/>
            <person name="Myers R.M."/>
            <person name="Cox D.R."/>
            <person name="Huang X."/>
            <person name="McPherson J.D."/>
            <person name="Mardis E.R."/>
            <person name="Clifton S.W."/>
            <person name="Warren W.C."/>
            <person name="Chinwalla A.T."/>
            <person name="Eddy S.R."/>
            <person name="Marra M.A."/>
            <person name="Ovcharenko I."/>
            <person name="Furey T.S."/>
            <person name="Miller W."/>
            <person name="Eichler E.E."/>
            <person name="Bork P."/>
            <person name="Suyama M."/>
            <person name="Torrents D."/>
            <person name="Waterston R.H."/>
            <person name="Wilson R.K."/>
        </authorList>
    </citation>
    <scope>NUCLEOTIDE SEQUENCE [LARGE SCALE GENOMIC DNA]</scope>
</reference>
<reference key="5">
    <citation type="journal article" date="2004" name="Genome Res.">
        <title>The status, quality, and expansion of the NIH full-length cDNA project: the Mammalian Gene Collection (MGC).</title>
        <authorList>
            <consortium name="The MGC Project Team"/>
        </authorList>
    </citation>
    <scope>NUCLEOTIDE SEQUENCE [LARGE SCALE MRNA] (ISOFORM 2)</scope>
    <scope>VARIANT ARG-290</scope>
</reference>
<reference key="6">
    <citation type="journal article" date="2003" name="Nat. Rev. Genet.">
        <title>Human and mouse proteases: a comparative genomic approach.</title>
        <authorList>
            <person name="Puente X.S."/>
            <person name="Sanchez L.M."/>
            <person name="Overall C.M."/>
            <person name="Lopez-Otin C."/>
        </authorList>
    </citation>
    <scope>IDENTIFICATION</scope>
</reference>
<reference key="7">
    <citation type="journal article" date="2004" name="J. Cell. Biochem.">
        <title>Induction of G1 cell cycle arrest and P15INK4b expression by ECRG1 through interaction with Miz-1.</title>
        <authorList>
            <person name="Zhao N."/>
            <person name="Wang J."/>
            <person name="Cui Y."/>
            <person name="Guo L."/>
            <person name="Lu S.-H."/>
        </authorList>
    </citation>
    <scope>INTERACTION WITH ZBTB17</scope>
</reference>
<reference key="8">
    <citation type="journal article" date="2006" name="Carcinogenesis">
        <title>Identification of a novel polymorphism Arg290Gln of esophageal cancer related gene 1 (ECRG1) and its related risk to esophageal squamous cell carcinoma.</title>
        <authorList>
            <person name="Li Y."/>
            <person name="Zhang X."/>
            <person name="Huang G."/>
            <person name="Miao X."/>
            <person name="Guo L."/>
            <person name="Lin D."/>
            <person name="Lu S.-H."/>
        </authorList>
    </citation>
    <scope>VARIANT ARG-290</scope>
</reference>
<gene>
    <name type="primary">TMPRSS11A</name>
    <name type="synonym">ECRG1</name>
    <name type="synonym">HATL1</name>
    <name type="synonym">HESP</name>
</gene>
<comment type="function">
    <text>Probable serine protease which may play a role in cellular senescence. Overexpression inhibits cell growth and induce G1 cell cycle arrest.</text>
</comment>
<comment type="subunit">
    <text>May interact with ZBTB17.</text>
</comment>
<comment type="subcellular location">
    <subcellularLocation>
        <location evidence="12">Membrane</location>
        <topology evidence="12">Single-pass type II membrane protein</topology>
    </subcellularLocation>
</comment>
<comment type="alternative products">
    <event type="alternative splicing"/>
    <isoform>
        <id>Q6ZMR5-2</id>
        <name>2</name>
        <sequence type="displayed"/>
    </isoform>
    <isoform>
        <id>Q6ZMR5-1</id>
        <name>1</name>
        <sequence type="described" ref="VSP_061449"/>
    </isoform>
</comment>
<comment type="tissue specificity">
    <text evidence="5">Expressed in esophagus, liver, colon and lung. Down-regulated in esophagus cancers.</text>
</comment>
<comment type="similarity">
    <text evidence="4">Belongs to the peptidase S1 family.</text>
</comment>
<comment type="sequence caution" evidence="12">
    <conflict type="frameshift">
        <sequence resource="EMBL-CDS" id="AAD41463"/>
    </conflict>
</comment>
<comment type="sequence caution" evidence="12">
    <conflict type="erroneous gene model prediction">
        <sequence resource="EMBL-CDS" id="CAD67985"/>
    </conflict>
</comment>
<proteinExistence type="evidence at protein level"/>
<evidence type="ECO:0000250" key="1"/>
<evidence type="ECO:0000255" key="2"/>
<evidence type="ECO:0000255" key="3">
    <source>
        <dbReference type="PROSITE-ProRule" id="PRU00188"/>
    </source>
</evidence>
<evidence type="ECO:0000255" key="4">
    <source>
        <dbReference type="PROSITE-ProRule" id="PRU00274"/>
    </source>
</evidence>
<evidence type="ECO:0000269" key="5">
    <source>
    </source>
</evidence>
<evidence type="ECO:0000269" key="6">
    <source>
    </source>
</evidence>
<evidence type="ECO:0000269" key="7">
    <source>
    </source>
</evidence>
<evidence type="ECO:0000269" key="8">
    <source>
    </source>
</evidence>
<evidence type="ECO:0000303" key="9">
    <source>
    </source>
</evidence>
<evidence type="ECO:0000303" key="10">
    <source>
    </source>
</evidence>
<evidence type="ECO:0000303" key="11">
    <source ref="2"/>
</evidence>
<evidence type="ECO:0000305" key="12"/>
<accession>Q6ZMR5</accession>
<accession>J3KNQ8</accession>
<accession>Q2NKI9</accession>
<accession>Q6JE90</accession>
<accession>Q7RTY4</accession>
<accession>Q86TK8</accession>
<name>TM11A_HUMAN</name>
<feature type="chain" id="PRO_5000095974" description="Transmembrane protease serine 11A">
    <location>
        <begin position="1"/>
        <end position="418"/>
    </location>
</feature>
<feature type="topological domain" description="Cytoplasmic" evidence="2">
    <location>
        <begin position="1"/>
        <end position="18"/>
    </location>
</feature>
<feature type="transmembrane region" description="Helical; Signal-anchor for type II membrane protein" evidence="2">
    <location>
        <begin position="19"/>
        <end position="39"/>
    </location>
</feature>
<feature type="topological domain" description="Extracellular" evidence="2">
    <location>
        <begin position="40"/>
        <end position="418"/>
    </location>
</feature>
<feature type="domain" description="SEA" evidence="3">
    <location>
        <begin position="47"/>
        <end position="164"/>
    </location>
</feature>
<feature type="domain" description="Peptidase S1" evidence="4">
    <location>
        <begin position="187"/>
        <end position="417"/>
    </location>
</feature>
<feature type="active site" description="Charge relay system" evidence="1">
    <location>
        <position position="227"/>
    </location>
</feature>
<feature type="active site" description="Charge relay system" evidence="1">
    <location>
        <position position="272"/>
    </location>
</feature>
<feature type="active site" description="Charge relay system" evidence="1">
    <location>
        <position position="368"/>
    </location>
</feature>
<feature type="glycosylation site" description="N-linked (GlcNAc...) asparagine" evidence="2">
    <location>
        <position position="153"/>
    </location>
</feature>
<feature type="glycosylation site" description="N-linked (GlcNAc...) asparagine" evidence="2">
    <location>
        <position position="303"/>
    </location>
</feature>
<feature type="disulfide bond" evidence="4">
    <location>
        <begin position="212"/>
        <end position="228"/>
    </location>
</feature>
<feature type="disulfide bond" evidence="4">
    <location>
        <begin position="337"/>
        <end position="353"/>
    </location>
</feature>
<feature type="disulfide bond" evidence="4">
    <location>
        <begin position="364"/>
        <end position="393"/>
    </location>
</feature>
<feature type="splice variant" id="VSP_061449" description="In isoform 1." evidence="9 10 11">
    <original>L</original>
    <variation>LVSQ</variation>
    <location>
        <position position="84"/>
    </location>
</feature>
<feature type="sequence variant" id="VAR_034797" description="In dbSNP:rs353163." evidence="5 6 7 8">
    <original>Q</original>
    <variation>R</variation>
    <location>
        <position position="290"/>
    </location>
</feature>
<feature type="sequence conflict" description="In Ref. 1; AAD41463." evidence="12" ref="1">
    <original>Y</original>
    <variation>F</variation>
    <location>
        <position position="50"/>
    </location>
</feature>
<feature type="sequence conflict" description="In Ref. 1; AAD41463." evidence="12" ref="1">
    <original>H</original>
    <variation>P</variation>
    <location>
        <position position="52"/>
    </location>
</feature>
<feature type="sequence conflict" description="In Ref. 1; AAD41463." evidence="12" ref="1">
    <original>T</original>
    <variation>I</variation>
    <location>
        <position position="170"/>
    </location>
</feature>
<feature type="sequence conflict" description="In Ref. 1; AAD41463." evidence="12" ref="1">
    <original>Y</original>
    <variation>C</variation>
    <location>
        <position position="264"/>
    </location>
</feature>
<feature type="sequence conflict" description="In Ref. 1; AAD41463." evidence="12" ref="1">
    <original>A</original>
    <variation>P</variation>
    <location>
        <position position="268"/>
    </location>
</feature>
<feature type="sequence conflict" description="In Ref. 1; AAD41463." evidence="12" ref="1">
    <original>E</original>
    <variation>K</variation>
    <location>
        <position position="270"/>
    </location>
</feature>
<feature type="sequence conflict" description="In Ref. 1; AAD41463." evidence="12" ref="1">
    <original>S</original>
    <variation>P</variation>
    <location>
        <position position="285"/>
    </location>
</feature>
<feature type="sequence conflict" description="In Ref. 1; AAD41463." evidence="12" ref="1">
    <original>A</original>
    <variation>V</variation>
    <location>
        <position position="327"/>
    </location>
</feature>